<protein>
    <recommendedName>
        <fullName evidence="6">Mitogen-activated protein kinase kinase kinase 1b</fullName>
        <shortName evidence="5">PpMEKK1b</shortName>
        <ecNumber evidence="1">2.7.11.25</ecNumber>
    </recommendedName>
    <alternativeName>
        <fullName evidence="5">MAP kinase kinase kinase 1b</fullName>
    </alternativeName>
</protein>
<evidence type="ECO:0000250" key="1">
    <source>
        <dbReference type="UniProtKB" id="Q39008"/>
    </source>
</evidence>
<evidence type="ECO:0000255" key="2">
    <source>
        <dbReference type="PROSITE-ProRule" id="PRU00159"/>
    </source>
</evidence>
<evidence type="ECO:0000256" key="3">
    <source>
        <dbReference type="SAM" id="MobiDB-lite"/>
    </source>
</evidence>
<evidence type="ECO:0000269" key="4">
    <source>
    </source>
</evidence>
<evidence type="ECO:0000303" key="5">
    <source>
    </source>
</evidence>
<evidence type="ECO:0000305" key="6"/>
<evidence type="ECO:0000312" key="7">
    <source>
        <dbReference type="EMBL" id="EDQ77074.1"/>
    </source>
</evidence>
<sequence length="764" mass="83151">MVEERGSSRSSRGGSWGSGEDGGSSHGGKGVPKLSRTVAKKIHKYDVSADHSDYEDDGSVHSTSSSGSRRNPLSKSIIQQQSFRVGANFEEDLKTLYELIGVSKPADLAISASDWQSRGKSIAYSQPLSSPSLSQEHGEASHSNDLKPSIIDFRSEAPAASPRELPVAPVKLDAHERMTYRSDYVNSQPQNHYGRKNSPSQRSPPPESFPAFDSSPSRLGREGYGLHRMQSDPVMPTLGALSPLGTGNAHPESAGSTATRRWSFDLVPGNHEGDYANMSQVVRDNLPSAAVAMPKNGLVRRSPIIRDPNRSNSSVSNPYAQRQYPNLAEEAESSAKPESSAIPDSSAMPELPAKLESTAVPELSAKPESNAKPESEPEQDSSVEARTEHYGSVRKSKIPSALIIDKFEEPSIVSTGRSPGVVSKRPPWDTWFKGDFIGSGTFGSVYEGIDNNGMFFAVKEVSLKDQGKVGQEAIKQLEHEIALLSDIQHPNIVQYLGTERDDEKLYIFLELVSKGSLASLYKKYYFVYDQVRAYTKQILSGLKYLHDRKIIHRDIKCANILVDTNGVVKLADFGMAKQVDKLGLLKSFMGSAHWMAPEVVNPKRQYNFLADIWSLGCTVLEMATGDAPFGELECHSVLWKVGNGEGPLIPDDLEDEMKDFISKCLEVTVGNRPTCDMLLTHPFITGEPMTGPVKLVPMPELSTISEERSIDVSESPSIATSSQSGSSPSVAGDAVSPASVAVRPRSMRTLRSEFSMSSPESIAS</sequence>
<accession>A9RVK2</accession>
<organism>
    <name type="scientific">Physcomitrium patens</name>
    <name type="common">Spreading-leaved earth moss</name>
    <name type="synonym">Physcomitrella patens</name>
    <dbReference type="NCBI Taxonomy" id="3218"/>
    <lineage>
        <taxon>Eukaryota</taxon>
        <taxon>Viridiplantae</taxon>
        <taxon>Streptophyta</taxon>
        <taxon>Embryophyta</taxon>
        <taxon>Bryophyta</taxon>
        <taxon>Bryophytina</taxon>
        <taxon>Bryopsida</taxon>
        <taxon>Funariidae</taxon>
        <taxon>Funariales</taxon>
        <taxon>Funariaceae</taxon>
        <taxon>Physcomitrium</taxon>
    </lineage>
</organism>
<name>M3K1B_PHYPA</name>
<dbReference type="EC" id="2.7.11.25" evidence="1"/>
<dbReference type="EMBL" id="DS544920">
    <property type="protein sequence ID" value="EDQ77074.1"/>
    <property type="status" value="ALT_SEQ"/>
    <property type="molecule type" value="Genomic_DNA"/>
</dbReference>
<dbReference type="RefSeq" id="XP_001758252.1">
    <property type="nucleotide sequence ID" value="XM_001758200.1"/>
</dbReference>
<dbReference type="SMR" id="A9RVK2"/>
<dbReference type="FunCoup" id="A9RVK2">
    <property type="interactions" value="1903"/>
</dbReference>
<dbReference type="PaxDb" id="3218-PP1S31_252V6.1"/>
<dbReference type="EnsemblPlants" id="Pp3c11_21820V3.1">
    <property type="protein sequence ID" value="PAC:32956884.CDS.1"/>
    <property type="gene ID" value="Pp3c11_21820"/>
</dbReference>
<dbReference type="EnsemblPlants" id="Pp3c11_21820V3.2">
    <property type="protein sequence ID" value="PAC:32956885.CDS.1"/>
    <property type="gene ID" value="Pp3c11_21820"/>
</dbReference>
<dbReference type="Gramene" id="Pp3c11_21820V3.1">
    <property type="protein sequence ID" value="PAC:32956884.CDS.1"/>
    <property type="gene ID" value="Pp3c11_21820"/>
</dbReference>
<dbReference type="Gramene" id="Pp3c11_21820V3.2">
    <property type="protein sequence ID" value="PAC:32956885.CDS.1"/>
    <property type="gene ID" value="Pp3c11_21820"/>
</dbReference>
<dbReference type="eggNOG" id="KOG0198">
    <property type="taxonomic scope" value="Eukaryota"/>
</dbReference>
<dbReference type="HOGENOM" id="CLU_000288_2_6_1"/>
<dbReference type="InParanoid" id="A9RVK2"/>
<dbReference type="OrthoDB" id="266718at2759"/>
<dbReference type="Proteomes" id="UP000006727">
    <property type="component" value="Chromosome 11"/>
</dbReference>
<dbReference type="GO" id="GO:0005737">
    <property type="term" value="C:cytoplasm"/>
    <property type="evidence" value="ECO:0000318"/>
    <property type="project" value="GO_Central"/>
</dbReference>
<dbReference type="GO" id="GO:0005886">
    <property type="term" value="C:plasma membrane"/>
    <property type="evidence" value="ECO:0000250"/>
    <property type="project" value="UniProtKB"/>
</dbReference>
<dbReference type="GO" id="GO:0005524">
    <property type="term" value="F:ATP binding"/>
    <property type="evidence" value="ECO:0007669"/>
    <property type="project" value="UniProtKB-KW"/>
</dbReference>
<dbReference type="GO" id="GO:0004709">
    <property type="term" value="F:MAP kinase kinase kinase activity"/>
    <property type="evidence" value="ECO:0000250"/>
    <property type="project" value="UniProtKB"/>
</dbReference>
<dbReference type="GO" id="GO:0106310">
    <property type="term" value="F:protein serine kinase activity"/>
    <property type="evidence" value="ECO:0007669"/>
    <property type="project" value="RHEA"/>
</dbReference>
<dbReference type="GO" id="GO:0006952">
    <property type="term" value="P:defense response"/>
    <property type="evidence" value="ECO:0007669"/>
    <property type="project" value="UniProtKB-KW"/>
</dbReference>
<dbReference type="GO" id="GO:0000165">
    <property type="term" value="P:MAPK cascade"/>
    <property type="evidence" value="ECO:0000318"/>
    <property type="project" value="GO_Central"/>
</dbReference>
<dbReference type="GO" id="GO:0010200">
    <property type="term" value="P:response to chitin"/>
    <property type="evidence" value="ECO:0000315"/>
    <property type="project" value="UniProtKB"/>
</dbReference>
<dbReference type="FunFam" id="1.10.510.10:FF:000359">
    <property type="entry name" value="Mitogen-activated protein kinase 1, putative, expressed"/>
    <property type="match status" value="1"/>
</dbReference>
<dbReference type="Gene3D" id="1.10.510.10">
    <property type="entry name" value="Transferase(Phosphotransferase) domain 1"/>
    <property type="match status" value="1"/>
</dbReference>
<dbReference type="InterPro" id="IPR011009">
    <property type="entry name" value="Kinase-like_dom_sf"/>
</dbReference>
<dbReference type="InterPro" id="IPR050538">
    <property type="entry name" value="MAP_kinase_kinase_kinase"/>
</dbReference>
<dbReference type="InterPro" id="IPR000719">
    <property type="entry name" value="Prot_kinase_dom"/>
</dbReference>
<dbReference type="InterPro" id="IPR017441">
    <property type="entry name" value="Protein_kinase_ATP_BS"/>
</dbReference>
<dbReference type="InterPro" id="IPR008271">
    <property type="entry name" value="Ser/Thr_kinase_AS"/>
</dbReference>
<dbReference type="PANTHER" id="PTHR48016">
    <property type="entry name" value="MAP KINASE KINASE KINASE SSK2-RELATED-RELATED"/>
    <property type="match status" value="1"/>
</dbReference>
<dbReference type="PANTHER" id="PTHR48016:SF29">
    <property type="entry name" value="MITOGEN-ACTIVATED PROTEIN KINASE KINASE KINASE 1-RELATED"/>
    <property type="match status" value="1"/>
</dbReference>
<dbReference type="Pfam" id="PF00069">
    <property type="entry name" value="Pkinase"/>
    <property type="match status" value="1"/>
</dbReference>
<dbReference type="SMART" id="SM00220">
    <property type="entry name" value="S_TKc"/>
    <property type="match status" value="1"/>
</dbReference>
<dbReference type="SUPFAM" id="SSF56112">
    <property type="entry name" value="Protein kinase-like (PK-like)"/>
    <property type="match status" value="1"/>
</dbReference>
<dbReference type="PROSITE" id="PS00107">
    <property type="entry name" value="PROTEIN_KINASE_ATP"/>
    <property type="match status" value="1"/>
</dbReference>
<dbReference type="PROSITE" id="PS50011">
    <property type="entry name" value="PROTEIN_KINASE_DOM"/>
    <property type="match status" value="1"/>
</dbReference>
<dbReference type="PROSITE" id="PS00108">
    <property type="entry name" value="PROTEIN_KINASE_ST"/>
    <property type="match status" value="1"/>
</dbReference>
<proteinExistence type="evidence at transcript level"/>
<reference key="1">
    <citation type="journal article" date="2016" name="Plant Cell">
        <title>An innate immunity pathway in the Moss Physcomitrella patens.</title>
        <authorList>
            <person name="Bressendorff S."/>
            <person name="Azevedo R."/>
            <person name="Kenchappa C.S."/>
            <person name="Ponce de Leon I."/>
            <person name="Olsen J.V."/>
            <person name="Rasmussen M.W."/>
            <person name="Erbs G."/>
            <person name="Newman M.A."/>
            <person name="Petersen M."/>
            <person name="Mundy J."/>
        </authorList>
    </citation>
    <scope>NUCLEOTIDE SEQUENCE [GENOMIC DNA]</scope>
    <scope>FUNCTION</scope>
    <scope>INDUCTION</scope>
    <scope>DISRUPTION PHENOTYPE</scope>
    <source>
        <strain evidence="5">cv. Gransden 2004</strain>
    </source>
</reference>
<reference evidence="7" key="2">
    <citation type="journal article" date="2008" name="Science">
        <title>The Physcomitrella genome reveals evolutionary insights into the conquest of land by plants.</title>
        <authorList>
            <person name="Rensing S.A."/>
            <person name="Lang D."/>
            <person name="Zimmer A.D."/>
            <person name="Terry A."/>
            <person name="Salamov A."/>
            <person name="Shapiro H."/>
            <person name="Nishiyama T."/>
            <person name="Perroud P.-F."/>
            <person name="Lindquist E.A."/>
            <person name="Kamisugi Y."/>
            <person name="Tanahashi T."/>
            <person name="Sakakibara K."/>
            <person name="Fujita T."/>
            <person name="Oishi K."/>
            <person name="Shin-I T."/>
            <person name="Kuroki Y."/>
            <person name="Toyoda A."/>
            <person name="Suzuki Y."/>
            <person name="Hashimoto S.-I."/>
            <person name="Yamaguchi K."/>
            <person name="Sugano S."/>
            <person name="Kohara Y."/>
            <person name="Fujiyama A."/>
            <person name="Anterola A."/>
            <person name="Aoki S."/>
            <person name="Ashton N."/>
            <person name="Barbazuk W.B."/>
            <person name="Barker E."/>
            <person name="Bennetzen J.L."/>
            <person name="Blankenship R."/>
            <person name="Cho S.H."/>
            <person name="Dutcher S.K."/>
            <person name="Estelle M."/>
            <person name="Fawcett J.A."/>
            <person name="Gundlach H."/>
            <person name="Hanada K."/>
            <person name="Heyl A."/>
            <person name="Hicks K.A."/>
            <person name="Hughes J."/>
            <person name="Lohr M."/>
            <person name="Mayer K."/>
            <person name="Melkozernov A."/>
            <person name="Murata T."/>
            <person name="Nelson D.R."/>
            <person name="Pils B."/>
            <person name="Prigge M."/>
            <person name="Reiss B."/>
            <person name="Renner T."/>
            <person name="Rombauts S."/>
            <person name="Rushton P.J."/>
            <person name="Sanderfoot A."/>
            <person name="Schween G."/>
            <person name="Shiu S.-H."/>
            <person name="Stueber K."/>
            <person name="Theodoulou F.L."/>
            <person name="Tu H."/>
            <person name="Van de Peer Y."/>
            <person name="Verrier P.J."/>
            <person name="Waters E."/>
            <person name="Wood A."/>
            <person name="Yang L."/>
            <person name="Cove D."/>
            <person name="Cuming A.C."/>
            <person name="Hasebe M."/>
            <person name="Lucas S."/>
            <person name="Mishler B.D."/>
            <person name="Reski R."/>
            <person name="Grigoriev I.V."/>
            <person name="Quatrano R.S."/>
            <person name="Boore J.L."/>
        </authorList>
    </citation>
    <scope>NUCLEOTIDE SEQUENCE [LARGE SCALE GENOMIC DNA] (PARTIAL)</scope>
    <source>
        <strain>cv. Gransden 2004</strain>
    </source>
</reference>
<keyword id="KW-0067">ATP-binding</keyword>
<keyword id="KW-1003">Cell membrane</keyword>
<keyword id="KW-0418">Kinase</keyword>
<keyword id="KW-0472">Membrane</keyword>
<keyword id="KW-0547">Nucleotide-binding</keyword>
<keyword id="KW-0611">Plant defense</keyword>
<keyword id="KW-1185">Reference proteome</keyword>
<keyword id="KW-0723">Serine/threonine-protein kinase</keyword>
<keyword id="KW-0808">Transferase</keyword>
<gene>
    <name type="primary">MEKK1b</name>
    <name evidence="7" type="ORF">PHYPADRAFT_24585</name>
</gene>
<feature type="chain" id="PRO_0000443377" description="Mitogen-activated protein kinase kinase kinase 1b">
    <location>
        <begin position="1"/>
        <end position="764"/>
    </location>
</feature>
<feature type="domain" description="Protein kinase" evidence="2">
    <location>
        <begin position="431"/>
        <end position="684"/>
    </location>
</feature>
<feature type="region of interest" description="Disordered" evidence="3">
    <location>
        <begin position="1"/>
        <end position="81"/>
    </location>
</feature>
<feature type="region of interest" description="Disordered" evidence="3">
    <location>
        <begin position="120"/>
        <end position="260"/>
    </location>
</feature>
<feature type="region of interest" description="Disordered" evidence="3">
    <location>
        <begin position="325"/>
        <end position="348"/>
    </location>
</feature>
<feature type="region of interest" description="Disordered" evidence="3">
    <location>
        <begin position="360"/>
        <end position="392"/>
    </location>
</feature>
<feature type="region of interest" description="Disordered" evidence="3">
    <location>
        <begin position="706"/>
        <end position="764"/>
    </location>
</feature>
<feature type="compositionally biased region" description="Gly residues" evidence="3">
    <location>
        <begin position="14"/>
        <end position="30"/>
    </location>
</feature>
<feature type="compositionally biased region" description="Low complexity" evidence="3">
    <location>
        <begin position="60"/>
        <end position="76"/>
    </location>
</feature>
<feature type="compositionally biased region" description="Low complexity" evidence="3">
    <location>
        <begin position="125"/>
        <end position="135"/>
    </location>
</feature>
<feature type="compositionally biased region" description="Basic and acidic residues" evidence="3">
    <location>
        <begin position="136"/>
        <end position="145"/>
    </location>
</feature>
<feature type="compositionally biased region" description="Polar residues" evidence="3">
    <location>
        <begin position="184"/>
        <end position="201"/>
    </location>
</feature>
<feature type="compositionally biased region" description="Low complexity" evidence="3">
    <location>
        <begin position="715"/>
        <end position="729"/>
    </location>
</feature>
<feature type="compositionally biased region" description="Polar residues" evidence="3">
    <location>
        <begin position="752"/>
        <end position="764"/>
    </location>
</feature>
<feature type="active site" description="Proton acceptor" evidence="2">
    <location>
        <position position="554"/>
    </location>
</feature>
<feature type="binding site" evidence="2">
    <location>
        <begin position="437"/>
        <end position="445"/>
    </location>
    <ligand>
        <name>ATP</name>
        <dbReference type="ChEBI" id="CHEBI:30616"/>
    </ligand>
</feature>
<feature type="binding site" evidence="2">
    <location>
        <position position="459"/>
    </location>
    <ligand>
        <name>ATP</name>
        <dbReference type="ChEBI" id="CHEBI:30616"/>
    </ligand>
</feature>
<comment type="function">
    <text evidence="4">The CERK1, MEKK1a/b, MKK1a/b/c and MPK4a/b proteins are involved in pathogen defense. The pathway induces rapid growth inhibition, cell wall depositions and accumulation of defense-related transcripts. This protein is required for responses to chitin and acts redundantly with MEKK1a.</text>
</comment>
<comment type="catalytic activity">
    <reaction evidence="1">
        <text>L-seryl-[protein] + ATP = O-phospho-L-seryl-[protein] + ADP + H(+)</text>
        <dbReference type="Rhea" id="RHEA:17989"/>
        <dbReference type="Rhea" id="RHEA-COMP:9863"/>
        <dbReference type="Rhea" id="RHEA-COMP:11604"/>
        <dbReference type="ChEBI" id="CHEBI:15378"/>
        <dbReference type="ChEBI" id="CHEBI:29999"/>
        <dbReference type="ChEBI" id="CHEBI:30616"/>
        <dbReference type="ChEBI" id="CHEBI:83421"/>
        <dbReference type="ChEBI" id="CHEBI:456216"/>
        <dbReference type="EC" id="2.7.11.25"/>
    </reaction>
</comment>
<comment type="catalytic activity">
    <reaction evidence="1">
        <text>L-threonyl-[protein] + ATP = O-phospho-L-threonyl-[protein] + ADP + H(+)</text>
        <dbReference type="Rhea" id="RHEA:46608"/>
        <dbReference type="Rhea" id="RHEA-COMP:11060"/>
        <dbReference type="Rhea" id="RHEA-COMP:11605"/>
        <dbReference type="ChEBI" id="CHEBI:15378"/>
        <dbReference type="ChEBI" id="CHEBI:30013"/>
        <dbReference type="ChEBI" id="CHEBI:30616"/>
        <dbReference type="ChEBI" id="CHEBI:61977"/>
        <dbReference type="ChEBI" id="CHEBI:456216"/>
        <dbReference type="EC" id="2.7.11.25"/>
    </reaction>
</comment>
<comment type="subcellular location">
    <subcellularLocation>
        <location evidence="1">Cell membrane</location>
    </subcellularLocation>
</comment>
<comment type="induction">
    <text evidence="4">Up-regulated in response to chitosan.</text>
</comment>
<comment type="disruption phenotype">
    <text evidence="4">Reduced chitin-induced MPK phosphorylation. Exhibits chitin-induced cell wall-associated depositions comparable to wild-type. Reduced accumulation of PAL4 and CHS transcripts in response to chitin. Double deletion mutant MEKK1a/MEKK1b does not phosphorylate MPK and is unable to induce the depositions in response to chitin. The growth of the double mutant is inhibited within 1 minute after chitin exposure as in wild-type.</text>
</comment>
<comment type="similarity">
    <text evidence="6">Belongs to the protein kinase superfamily. STE Ser/Thr protein kinase family. MAP kinase kinase kinase subfamily.</text>
</comment>
<comment type="sequence caution" evidence="6">
    <conflict type="erroneous gene model prediction">
        <sequence resource="EMBL-CDS" id="EDQ77074"/>
    </conflict>
</comment>